<sequence>MIKEIISQYQNKSFLVAYSGGLDSTVLLYKLLEIKKKYYIKIRAIHINHNLTLLSKKWSEHCKKICNINHIPLIVENINIKNKTNNLEEKLRIKRYNIIYNHLFSDEILLTGHHINDQCETFFLSLKRGSGPTGLSSMSFETLFGTKKIVRPFLKKTKIELQTWAKKKKLHWIEDFSNLNIDYDRNFIRNEVIPILEKRWSYFLKNCFRTTIICQQETRLLNDFLRERIYKLIKFDDSLNIENFKNIKQAMCTALIRYWLLLKKIKMPSYKNIQCIYRQMIFSRIDSNPKIILGKHEVRRYKQSLHFIKTQPSLKNTLLFWHKNNIKLTLPNNLGYLIKNNNGTVLPGPKENELINIRFQYEGYVLILGRSKKRKIKKIWQEKNIPPWLRNQIPLLFYNNYFISAIGVFVVNIKNKNRTKCIISWQNDLKSTTNNFFSFY</sequence>
<gene>
    <name evidence="1" type="primary">tilS</name>
    <name type="synonym">mesJ</name>
    <name type="ordered locus">BU110</name>
</gene>
<dbReference type="EC" id="6.3.4.19" evidence="1"/>
<dbReference type="EMBL" id="BA000003">
    <property type="protein sequence ID" value="BAB12829.1"/>
    <property type="molecule type" value="Genomic_DNA"/>
</dbReference>
<dbReference type="RefSeq" id="NP_239943.1">
    <property type="nucleotide sequence ID" value="NC_002528.1"/>
</dbReference>
<dbReference type="RefSeq" id="WP_010895950.1">
    <property type="nucleotide sequence ID" value="NC_002528.1"/>
</dbReference>
<dbReference type="SMR" id="P57211"/>
<dbReference type="STRING" id="563178.BUAP5A_108"/>
<dbReference type="EnsemblBacteria" id="BAB12829">
    <property type="protein sequence ID" value="BAB12829"/>
    <property type="gene ID" value="BAB12829"/>
</dbReference>
<dbReference type="KEGG" id="buc:BU110"/>
<dbReference type="PATRIC" id="fig|107806.10.peg.118"/>
<dbReference type="eggNOG" id="COG0037">
    <property type="taxonomic scope" value="Bacteria"/>
</dbReference>
<dbReference type="HOGENOM" id="CLU_018869_2_0_6"/>
<dbReference type="Proteomes" id="UP000001806">
    <property type="component" value="Chromosome"/>
</dbReference>
<dbReference type="GO" id="GO:0005737">
    <property type="term" value="C:cytoplasm"/>
    <property type="evidence" value="ECO:0007669"/>
    <property type="project" value="UniProtKB-SubCell"/>
</dbReference>
<dbReference type="GO" id="GO:0005524">
    <property type="term" value="F:ATP binding"/>
    <property type="evidence" value="ECO:0007669"/>
    <property type="project" value="UniProtKB-UniRule"/>
</dbReference>
<dbReference type="GO" id="GO:0032267">
    <property type="term" value="F:tRNA(Ile)-lysidine synthase activity"/>
    <property type="evidence" value="ECO:0007669"/>
    <property type="project" value="UniProtKB-EC"/>
</dbReference>
<dbReference type="GO" id="GO:0006400">
    <property type="term" value="P:tRNA modification"/>
    <property type="evidence" value="ECO:0007669"/>
    <property type="project" value="UniProtKB-UniRule"/>
</dbReference>
<dbReference type="CDD" id="cd01992">
    <property type="entry name" value="TilS_N"/>
    <property type="match status" value="1"/>
</dbReference>
<dbReference type="Gene3D" id="1.20.59.20">
    <property type="match status" value="1"/>
</dbReference>
<dbReference type="Gene3D" id="3.40.50.620">
    <property type="entry name" value="HUPs"/>
    <property type="match status" value="1"/>
</dbReference>
<dbReference type="HAMAP" id="MF_01161">
    <property type="entry name" value="tRNA_Ile_lys_synt"/>
    <property type="match status" value="1"/>
</dbReference>
<dbReference type="InterPro" id="IPR012796">
    <property type="entry name" value="Lysidine-tRNA-synth_C"/>
</dbReference>
<dbReference type="InterPro" id="IPR014729">
    <property type="entry name" value="Rossmann-like_a/b/a_fold"/>
</dbReference>
<dbReference type="InterPro" id="IPR011063">
    <property type="entry name" value="TilS/TtcA_N"/>
</dbReference>
<dbReference type="InterPro" id="IPR012094">
    <property type="entry name" value="tRNA_Ile_lys_synt"/>
</dbReference>
<dbReference type="InterPro" id="IPR012795">
    <property type="entry name" value="tRNA_Ile_lys_synt_N"/>
</dbReference>
<dbReference type="InterPro" id="IPR015262">
    <property type="entry name" value="tRNA_Ile_lys_synt_subst-bd"/>
</dbReference>
<dbReference type="NCBIfam" id="TIGR02433">
    <property type="entry name" value="lysidine_TilS_C"/>
    <property type="match status" value="1"/>
</dbReference>
<dbReference type="NCBIfam" id="TIGR02432">
    <property type="entry name" value="lysidine_TilS_N"/>
    <property type="match status" value="1"/>
</dbReference>
<dbReference type="PANTHER" id="PTHR43033">
    <property type="entry name" value="TRNA(ILE)-LYSIDINE SYNTHASE-RELATED"/>
    <property type="match status" value="1"/>
</dbReference>
<dbReference type="PANTHER" id="PTHR43033:SF1">
    <property type="entry name" value="TRNA(ILE)-LYSIDINE SYNTHASE-RELATED"/>
    <property type="match status" value="1"/>
</dbReference>
<dbReference type="Pfam" id="PF01171">
    <property type="entry name" value="ATP_bind_3"/>
    <property type="match status" value="1"/>
</dbReference>
<dbReference type="Pfam" id="PF09179">
    <property type="entry name" value="TilS"/>
    <property type="match status" value="1"/>
</dbReference>
<dbReference type="Pfam" id="PF11734">
    <property type="entry name" value="TilS_C"/>
    <property type="match status" value="1"/>
</dbReference>
<dbReference type="SMART" id="SM00977">
    <property type="entry name" value="TilS_C"/>
    <property type="match status" value="1"/>
</dbReference>
<dbReference type="SUPFAM" id="SSF52402">
    <property type="entry name" value="Adenine nucleotide alpha hydrolases-like"/>
    <property type="match status" value="1"/>
</dbReference>
<dbReference type="SUPFAM" id="SSF82829">
    <property type="entry name" value="MesJ substrate recognition domain-like"/>
    <property type="match status" value="1"/>
</dbReference>
<dbReference type="SUPFAM" id="SSF56037">
    <property type="entry name" value="PheT/TilS domain"/>
    <property type="match status" value="1"/>
</dbReference>
<accession>P57211</accession>
<organism>
    <name type="scientific">Buchnera aphidicola subsp. Acyrthosiphon pisum (strain APS)</name>
    <name type="common">Acyrthosiphon pisum symbiotic bacterium</name>
    <dbReference type="NCBI Taxonomy" id="107806"/>
    <lineage>
        <taxon>Bacteria</taxon>
        <taxon>Pseudomonadati</taxon>
        <taxon>Pseudomonadota</taxon>
        <taxon>Gammaproteobacteria</taxon>
        <taxon>Enterobacterales</taxon>
        <taxon>Erwiniaceae</taxon>
        <taxon>Buchnera</taxon>
    </lineage>
</organism>
<protein>
    <recommendedName>
        <fullName evidence="1">tRNA(Ile)-lysidine synthase</fullName>
        <ecNumber evidence="1">6.3.4.19</ecNumber>
    </recommendedName>
    <alternativeName>
        <fullName evidence="1">tRNA(Ile)-2-lysyl-cytidine synthase</fullName>
    </alternativeName>
    <alternativeName>
        <fullName evidence="1">tRNA(Ile)-lysidine synthetase</fullName>
    </alternativeName>
</protein>
<comment type="function">
    <text evidence="1">Ligates lysine onto the cytidine present at position 34 of the AUA codon-specific tRNA(Ile) that contains the anticodon CAU, in an ATP-dependent manner. Cytidine is converted to lysidine, thus changing the amino acid specificity of the tRNA from methionine to isoleucine.</text>
</comment>
<comment type="catalytic activity">
    <reaction evidence="1">
        <text>cytidine(34) in tRNA(Ile2) + L-lysine + ATP = lysidine(34) in tRNA(Ile2) + AMP + diphosphate + H(+)</text>
        <dbReference type="Rhea" id="RHEA:43744"/>
        <dbReference type="Rhea" id="RHEA-COMP:10625"/>
        <dbReference type="Rhea" id="RHEA-COMP:10670"/>
        <dbReference type="ChEBI" id="CHEBI:15378"/>
        <dbReference type="ChEBI" id="CHEBI:30616"/>
        <dbReference type="ChEBI" id="CHEBI:32551"/>
        <dbReference type="ChEBI" id="CHEBI:33019"/>
        <dbReference type="ChEBI" id="CHEBI:82748"/>
        <dbReference type="ChEBI" id="CHEBI:83665"/>
        <dbReference type="ChEBI" id="CHEBI:456215"/>
        <dbReference type="EC" id="6.3.4.19"/>
    </reaction>
</comment>
<comment type="subcellular location">
    <subcellularLocation>
        <location evidence="1">Cytoplasm</location>
    </subcellularLocation>
</comment>
<comment type="domain">
    <text>The N-terminal region contains the highly conserved SGGXDS motif, predicted to be a P-loop motif involved in ATP binding.</text>
</comment>
<comment type="similarity">
    <text evidence="1">Belongs to the tRNA(Ile)-lysidine synthase family.</text>
</comment>
<reference key="1">
    <citation type="journal article" date="2000" name="Nature">
        <title>Genome sequence of the endocellular bacterial symbiont of aphids Buchnera sp. APS.</title>
        <authorList>
            <person name="Shigenobu S."/>
            <person name="Watanabe H."/>
            <person name="Hattori M."/>
            <person name="Sakaki Y."/>
            <person name="Ishikawa H."/>
        </authorList>
    </citation>
    <scope>NUCLEOTIDE SEQUENCE [LARGE SCALE GENOMIC DNA]</scope>
    <source>
        <strain>APS</strain>
    </source>
</reference>
<name>TILS_BUCAI</name>
<feature type="chain" id="PRO_0000181664" description="tRNA(Ile)-lysidine synthase">
    <location>
        <begin position="1"/>
        <end position="440"/>
    </location>
</feature>
<feature type="binding site" evidence="1">
    <location>
        <begin position="19"/>
        <end position="24"/>
    </location>
    <ligand>
        <name>ATP</name>
        <dbReference type="ChEBI" id="CHEBI:30616"/>
    </ligand>
</feature>
<evidence type="ECO:0000255" key="1">
    <source>
        <dbReference type="HAMAP-Rule" id="MF_01161"/>
    </source>
</evidence>
<proteinExistence type="inferred from homology"/>
<keyword id="KW-0067">ATP-binding</keyword>
<keyword id="KW-0963">Cytoplasm</keyword>
<keyword id="KW-0436">Ligase</keyword>
<keyword id="KW-0547">Nucleotide-binding</keyword>
<keyword id="KW-1185">Reference proteome</keyword>
<keyword id="KW-0819">tRNA processing</keyword>